<accession>Q47748</accession>
<gene>
    <name type="primary">vanHB</name>
    <name type="ordered locus">EF_2295</name>
</gene>
<keyword id="KW-0046">Antibiotic resistance</keyword>
<keyword id="KW-0961">Cell wall biogenesis/degradation</keyword>
<keyword id="KW-0520">NAD</keyword>
<keyword id="KW-0560">Oxidoreductase</keyword>
<keyword id="KW-1185">Reference proteome</keyword>
<comment type="function">
    <text>Required for high-level resistance to glycopeptides antibiotics. Catalyzes the reduction of 2-keto acids to 2-D-hydroxy acids that give rise to peptidoglycan precursors that terminate in the depsipeptide D-alanine-2-lactate rather than the dipeptide D-alanine-D-alanine thus preventing vancomycin binding.</text>
</comment>
<comment type="induction">
    <text evidence="1">By vancomycin, mediated by VanS/VanR.</text>
</comment>
<comment type="similarity">
    <text evidence="2">Belongs to the D-isomer specific 2-hydroxyacid dehydrogenase family.</text>
</comment>
<protein>
    <recommendedName>
        <fullName>D-specific alpha-keto acid dehydrogenase</fullName>
        <ecNumber>1.1.1.-</ecNumber>
    </recommendedName>
    <alternativeName>
        <fullName>Vancomycin B-type resistance protein VanHB</fullName>
    </alternativeName>
</protein>
<reference key="1">
    <citation type="journal article" date="1996" name="J. Bacteriol.">
        <title>Regulation of VanB-type vancomycin resistance gene expression by the VanS(B)-VanR(B) two-component regulatory system in Enterococcus faecalis V583.</title>
        <authorList>
            <person name="Evers S."/>
            <person name="Courvalin P."/>
        </authorList>
    </citation>
    <scope>NUCLEOTIDE SEQUENCE [GENOMIC DNA]</scope>
    <source>
        <strain>ATCC 700802 / V583</strain>
    </source>
</reference>
<reference key="2">
    <citation type="journal article" date="2003" name="Science">
        <title>Role of mobile DNA in the evolution of vancomycin-resistant Enterococcus faecalis.</title>
        <authorList>
            <person name="Paulsen I.T."/>
            <person name="Banerjei L."/>
            <person name="Myers G.S.A."/>
            <person name="Nelson K.E."/>
            <person name="Seshadri R."/>
            <person name="Read T.D."/>
            <person name="Fouts D.E."/>
            <person name="Eisen J.A."/>
            <person name="Gill S.R."/>
            <person name="Heidelberg J.F."/>
            <person name="Tettelin H."/>
            <person name="Dodson R.J."/>
            <person name="Umayam L.A."/>
            <person name="Brinkac L.M."/>
            <person name="Beanan M.J."/>
            <person name="Daugherty S.C."/>
            <person name="DeBoy R.T."/>
            <person name="Durkin S.A."/>
            <person name="Kolonay J.F."/>
            <person name="Madupu R."/>
            <person name="Nelson W.C."/>
            <person name="Vamathevan J.J."/>
            <person name="Tran B."/>
            <person name="Upton J."/>
            <person name="Hansen T."/>
            <person name="Shetty J."/>
            <person name="Khouri H.M."/>
            <person name="Utterback T.R."/>
            <person name="Radune D."/>
            <person name="Ketchum K.A."/>
            <person name="Dougherty B.A."/>
            <person name="Fraser C.M."/>
        </authorList>
    </citation>
    <scope>NUCLEOTIDE SEQUENCE [LARGE SCALE GENOMIC DNA]</scope>
    <source>
        <strain>ATCC 700802 / V583</strain>
    </source>
</reference>
<name>VANH_ENTFA</name>
<proteinExistence type="inferred from homology"/>
<evidence type="ECO:0000250" key="1"/>
<evidence type="ECO:0000305" key="2"/>
<organism>
    <name type="scientific">Enterococcus faecalis (strain ATCC 700802 / V583)</name>
    <dbReference type="NCBI Taxonomy" id="226185"/>
    <lineage>
        <taxon>Bacteria</taxon>
        <taxon>Bacillati</taxon>
        <taxon>Bacillota</taxon>
        <taxon>Bacilli</taxon>
        <taxon>Lactobacillales</taxon>
        <taxon>Enterococcaceae</taxon>
        <taxon>Enterococcus</taxon>
    </lineage>
</organism>
<feature type="chain" id="PRO_0000076022" description="D-specific alpha-keto acid dehydrogenase">
    <location>
        <begin position="1"/>
        <end position="323"/>
    </location>
</feature>
<feature type="active site" evidence="1">
    <location>
        <position position="232"/>
    </location>
</feature>
<feature type="active site" evidence="1">
    <location>
        <position position="261"/>
    </location>
</feature>
<feature type="active site" description="Proton donor" evidence="1">
    <location>
        <position position="293"/>
    </location>
</feature>
<feature type="binding site" evidence="1">
    <location>
        <begin position="157"/>
        <end position="158"/>
    </location>
    <ligand>
        <name>NAD(+)</name>
        <dbReference type="ChEBI" id="CHEBI:57540"/>
    </ligand>
</feature>
<feature type="binding site" evidence="1">
    <location>
        <begin position="230"/>
        <end position="232"/>
    </location>
    <ligand>
        <name>NAD(+)</name>
        <dbReference type="ChEBI" id="CHEBI:57540"/>
    </ligand>
</feature>
<feature type="binding site" evidence="1">
    <location>
        <position position="256"/>
    </location>
    <ligand>
        <name>NAD(+)</name>
        <dbReference type="ChEBI" id="CHEBI:57540"/>
    </ligand>
</feature>
<feature type="binding site" evidence="1">
    <location>
        <begin position="293"/>
        <end position="296"/>
    </location>
    <ligand>
        <name>NAD(+)</name>
        <dbReference type="ChEBI" id="CHEBI:57540"/>
    </ligand>
</feature>
<feature type="sequence conflict" description="In Ref. 1; AAB05626." evidence="2" ref="1">
    <original>RQ</original>
    <variation>SE</variation>
    <location>
        <begin position="216"/>
        <end position="217"/>
    </location>
</feature>
<dbReference type="EC" id="1.1.1.-"/>
<dbReference type="EMBL" id="U35369">
    <property type="protein sequence ID" value="AAB05626.1"/>
    <property type="molecule type" value="Genomic_DNA"/>
</dbReference>
<dbReference type="EMBL" id="AE016830">
    <property type="protein sequence ID" value="AAO82022.1"/>
    <property type="molecule type" value="Genomic_DNA"/>
</dbReference>
<dbReference type="RefSeq" id="NP_815952.1">
    <property type="nucleotide sequence ID" value="NC_004668.1"/>
</dbReference>
<dbReference type="SMR" id="Q47748"/>
<dbReference type="STRING" id="226185.EF_2295"/>
<dbReference type="EnsemblBacteria" id="AAO82022">
    <property type="protein sequence ID" value="AAO82022"/>
    <property type="gene ID" value="EF_2295"/>
</dbReference>
<dbReference type="KEGG" id="efa:EF2295"/>
<dbReference type="PATRIC" id="fig|226185.45.peg.1237"/>
<dbReference type="eggNOG" id="COG1052">
    <property type="taxonomic scope" value="Bacteria"/>
</dbReference>
<dbReference type="HOGENOM" id="CLU_019796_1_1_9"/>
<dbReference type="Proteomes" id="UP000001415">
    <property type="component" value="Chromosome"/>
</dbReference>
<dbReference type="GO" id="GO:0008720">
    <property type="term" value="F:D-lactate dehydrogenase activity"/>
    <property type="evidence" value="ECO:0007669"/>
    <property type="project" value="TreeGrafter"/>
</dbReference>
<dbReference type="GO" id="GO:0051287">
    <property type="term" value="F:NAD binding"/>
    <property type="evidence" value="ECO:0007669"/>
    <property type="project" value="InterPro"/>
</dbReference>
<dbReference type="GO" id="GO:0071555">
    <property type="term" value="P:cell wall organization"/>
    <property type="evidence" value="ECO:0007669"/>
    <property type="project" value="UniProtKB-KW"/>
</dbReference>
<dbReference type="GO" id="GO:0046677">
    <property type="term" value="P:response to antibiotic"/>
    <property type="evidence" value="ECO:0007669"/>
    <property type="project" value="UniProtKB-KW"/>
</dbReference>
<dbReference type="CDD" id="cd12185">
    <property type="entry name" value="HGDH_LDH_like"/>
    <property type="match status" value="1"/>
</dbReference>
<dbReference type="FunFam" id="3.40.50.720:FF:000041">
    <property type="entry name" value="D-3-phosphoglycerate dehydrogenase"/>
    <property type="match status" value="1"/>
</dbReference>
<dbReference type="Gene3D" id="3.40.50.720">
    <property type="entry name" value="NAD(P)-binding Rossmann-like Domain"/>
    <property type="match status" value="2"/>
</dbReference>
<dbReference type="InterPro" id="IPR006139">
    <property type="entry name" value="D-isomer_2_OHA_DH_cat_dom"/>
</dbReference>
<dbReference type="InterPro" id="IPR029753">
    <property type="entry name" value="D-isomer_DH_CS"/>
</dbReference>
<dbReference type="InterPro" id="IPR029752">
    <property type="entry name" value="D-isomer_DH_CS1"/>
</dbReference>
<dbReference type="InterPro" id="IPR006140">
    <property type="entry name" value="D-isomer_DH_NAD-bd"/>
</dbReference>
<dbReference type="InterPro" id="IPR036291">
    <property type="entry name" value="NAD(P)-bd_dom_sf"/>
</dbReference>
<dbReference type="NCBIfam" id="NF000492">
    <property type="entry name" value="vanH_gen"/>
    <property type="match status" value="1"/>
</dbReference>
<dbReference type="PANTHER" id="PTHR43026">
    <property type="entry name" value="2-HYDROXYACID DEHYDROGENASE HOMOLOG 1-RELATED"/>
    <property type="match status" value="1"/>
</dbReference>
<dbReference type="PANTHER" id="PTHR43026:SF1">
    <property type="entry name" value="2-HYDROXYACID DEHYDROGENASE HOMOLOG 1-RELATED"/>
    <property type="match status" value="1"/>
</dbReference>
<dbReference type="Pfam" id="PF00389">
    <property type="entry name" value="2-Hacid_dh"/>
    <property type="match status" value="1"/>
</dbReference>
<dbReference type="Pfam" id="PF02826">
    <property type="entry name" value="2-Hacid_dh_C"/>
    <property type="match status" value="1"/>
</dbReference>
<dbReference type="SUPFAM" id="SSF52283">
    <property type="entry name" value="Formate/glycerate dehydrogenase catalytic domain-like"/>
    <property type="match status" value="1"/>
</dbReference>
<dbReference type="SUPFAM" id="SSF51735">
    <property type="entry name" value="NAD(P)-binding Rossmann-fold domains"/>
    <property type="match status" value="1"/>
</dbReference>
<dbReference type="PROSITE" id="PS00065">
    <property type="entry name" value="D_2_HYDROXYACID_DH_1"/>
    <property type="match status" value="1"/>
</dbReference>
<dbReference type="PROSITE" id="PS00670">
    <property type="entry name" value="D_2_HYDROXYACID_DH_2"/>
    <property type="match status" value="1"/>
</dbReference>
<dbReference type="PROSITE" id="PS00671">
    <property type="entry name" value="D_2_HYDROXYACID_DH_3"/>
    <property type="match status" value="1"/>
</dbReference>
<sequence length="323" mass="35266">MRKSMGITVFGCEQDEANAFRTLSPDFHIIPTLISDAISADNAKLAAGNQCISVGHKSEVSEATILALRKVGVKYISTRSIGCNHIDTTAAERMGISVGTVAYSPDSVADYALMLMLMAIRGAKSTIHAVAQQNFRLDCVRGKELRDMTVGVIGTGHIGQAVVKRLRGFGCRVLAYDNSRKIEADYVQLDELLKNSDIVTLHVPLCADTRHLIGQRQIGEMKQGAFLINTGRGALVDTGSLVEALGSGKLGGAALDVLEGEDQFVYTDCSQKVLDHPFLSQLLRMPNVIITPHTAYYTERVLRDTTEKTIRNCLNFERSLQHE</sequence>